<proteinExistence type="evidence at transcript level"/>
<protein>
    <recommendedName>
        <fullName>Proto-oncogene tyrosine-protein kinase LCK</fullName>
        <ecNumber>2.7.10.2</ecNumber>
    </recommendedName>
    <alternativeName>
        <fullName>Protein-tyrosine kinase C-TKL</fullName>
    </alternativeName>
    <alternativeName>
        <fullName>p56tk1</fullName>
    </alternativeName>
</protein>
<keyword id="KW-0067">ATP-binding</keyword>
<keyword id="KW-1003">Cell membrane</keyword>
<keyword id="KW-0963">Cytoplasm</keyword>
<keyword id="KW-0418">Kinase</keyword>
<keyword id="KW-0449">Lipoprotein</keyword>
<keyword id="KW-0472">Membrane</keyword>
<keyword id="KW-0519">Myristate</keyword>
<keyword id="KW-0547">Nucleotide-binding</keyword>
<keyword id="KW-0564">Palmitate</keyword>
<keyword id="KW-0597">Phosphoprotein</keyword>
<keyword id="KW-0656">Proto-oncogene</keyword>
<keyword id="KW-1185">Reference proteome</keyword>
<keyword id="KW-0727">SH2 domain</keyword>
<keyword id="KW-0728">SH3 domain</keyword>
<keyword id="KW-0808">Transferase</keyword>
<keyword id="KW-0829">Tyrosine-protein kinase</keyword>
<reference key="1">
    <citation type="submission" date="1991-08" db="EMBL/GenBank/DDBJ databases">
        <authorList>
            <person name="Gaertner T."/>
            <person name="Khnel H."/>
            <person name="Strebhardt K."/>
            <person name="Ruebsamen-Waigmann H."/>
        </authorList>
    </citation>
    <scope>NUCLEOTIDE SEQUENCE [MRNA]</scope>
    <source>
        <tissue>Spleen</tissue>
    </source>
</reference>
<reference key="2">
    <citation type="journal article" date="1992" name="Mol. Cell. Biol.">
        <title>tkl is the avian homolog of the mammalian lck tyrosine protein kinase gene.</title>
        <authorList>
            <person name="Chow L."/>
            <person name="Ratcliffe M."/>
            <person name="Veillette A."/>
        </authorList>
    </citation>
    <scope>NUCLEOTIDE SEQUENCE [MRNA] OF 1-89</scope>
</reference>
<reference key="3">
    <citation type="journal article" date="1987" name="Proc. Natl. Acad. Sci. U.S.A.">
        <title>Additional member of the protein-tyrosine kinase family: the src- and lck-related protooncogene c-tkl.</title>
        <authorList>
            <person name="Strebhardt K."/>
            <person name="Mullins J.I."/>
            <person name="Bruck C."/>
            <person name="Ruebsamen-Waigmann H."/>
        </authorList>
    </citation>
    <scope>NUCLEOTIDE SEQUENCE [MRNA] OF 47-508</scope>
</reference>
<feature type="initiator methionine" description="Removed" evidence="7">
    <location>
        <position position="1"/>
    </location>
</feature>
<feature type="chain" id="PRO_0000088128" description="Proto-oncogene tyrosine-protein kinase LCK">
    <location>
        <begin position="2"/>
        <end position="508"/>
    </location>
</feature>
<feature type="domain" description="SH3" evidence="5">
    <location>
        <begin position="60"/>
        <end position="120"/>
    </location>
</feature>
<feature type="domain" description="SH2" evidence="4">
    <location>
        <begin position="126"/>
        <end position="223"/>
    </location>
</feature>
<feature type="domain" description="Protein kinase" evidence="3">
    <location>
        <begin position="244"/>
        <end position="497"/>
    </location>
</feature>
<feature type="active site" description="Proton acceptor" evidence="3 6">
    <location>
        <position position="363"/>
    </location>
</feature>
<feature type="binding site" evidence="3">
    <location>
        <begin position="250"/>
        <end position="258"/>
    </location>
    <ligand>
        <name>ATP</name>
        <dbReference type="ChEBI" id="CHEBI:30616"/>
    </ligand>
</feature>
<feature type="binding site" evidence="3">
    <location>
        <position position="272"/>
    </location>
    <ligand>
        <name>ATP</name>
        <dbReference type="ChEBI" id="CHEBI:30616"/>
    </ligand>
</feature>
<feature type="modified residue" description="Phosphotyrosine; by autocatalysis" evidence="1">
    <location>
        <position position="393"/>
    </location>
</feature>
<feature type="modified residue" description="Phosphotyrosine" evidence="1">
    <location>
        <position position="504"/>
    </location>
</feature>
<feature type="lipid moiety-binding region" description="N-myristoyl glycine" evidence="1">
    <location>
        <position position="2"/>
    </location>
</feature>
<feature type="lipid moiety-binding region" description="S-palmitoyl cysteine" evidence="1">
    <location>
        <position position="3"/>
    </location>
</feature>
<feature type="lipid moiety-binding region" description="S-palmitoyl cysteine" evidence="1">
    <location>
        <position position="5"/>
    </location>
</feature>
<evidence type="ECO:0000250" key="1"/>
<evidence type="ECO:0000250" key="2">
    <source>
        <dbReference type="UniProtKB" id="P06239"/>
    </source>
</evidence>
<evidence type="ECO:0000255" key="3">
    <source>
        <dbReference type="PROSITE-ProRule" id="PRU00159"/>
    </source>
</evidence>
<evidence type="ECO:0000255" key="4">
    <source>
        <dbReference type="PROSITE-ProRule" id="PRU00191"/>
    </source>
</evidence>
<evidence type="ECO:0000255" key="5">
    <source>
        <dbReference type="PROSITE-ProRule" id="PRU00192"/>
    </source>
</evidence>
<evidence type="ECO:0000255" key="6">
    <source>
        <dbReference type="PROSITE-ProRule" id="PRU10028"/>
    </source>
</evidence>
<evidence type="ECO:0000305" key="7"/>
<name>LCK_CHICK</name>
<accession>P42683</accession>
<accession>Q53WS8</accession>
<organism>
    <name type="scientific">Gallus gallus</name>
    <name type="common">Chicken</name>
    <dbReference type="NCBI Taxonomy" id="9031"/>
    <lineage>
        <taxon>Eukaryota</taxon>
        <taxon>Metazoa</taxon>
        <taxon>Chordata</taxon>
        <taxon>Craniata</taxon>
        <taxon>Vertebrata</taxon>
        <taxon>Euteleostomi</taxon>
        <taxon>Archelosauria</taxon>
        <taxon>Archosauria</taxon>
        <taxon>Dinosauria</taxon>
        <taxon>Saurischia</taxon>
        <taxon>Theropoda</taxon>
        <taxon>Coelurosauria</taxon>
        <taxon>Aves</taxon>
        <taxon>Neognathae</taxon>
        <taxon>Galloanserae</taxon>
        <taxon>Galliformes</taxon>
        <taxon>Phasianidae</taxon>
        <taxon>Phasianinae</taxon>
        <taxon>Gallus</taxon>
    </lineage>
</organism>
<dbReference type="EC" id="2.7.10.2"/>
<dbReference type="EMBL" id="X60380">
    <property type="protein sequence ID" value="CAA42930.1"/>
    <property type="molecule type" value="mRNA"/>
</dbReference>
<dbReference type="EMBL" id="M85043">
    <property type="protein sequence ID" value="AAA49003.1"/>
    <property type="molecule type" value="mRNA"/>
</dbReference>
<dbReference type="EMBL" id="J03579">
    <property type="protein sequence ID" value="AAA49081.1"/>
    <property type="status" value="ALT_INIT"/>
    <property type="molecule type" value="mRNA"/>
</dbReference>
<dbReference type="PIR" id="A42126">
    <property type="entry name" value="A39939"/>
</dbReference>
<dbReference type="SMR" id="P42683"/>
<dbReference type="FunCoup" id="P42683">
    <property type="interactions" value="34"/>
</dbReference>
<dbReference type="STRING" id="9031.ENSGALP00000000634"/>
<dbReference type="iPTMnet" id="P42683"/>
<dbReference type="PaxDb" id="9031-ENSGALP00000000634"/>
<dbReference type="VEuPathDB" id="HostDB:geneid_396460"/>
<dbReference type="eggNOG" id="KOG0197">
    <property type="taxonomic scope" value="Eukaryota"/>
</dbReference>
<dbReference type="InParanoid" id="P42683"/>
<dbReference type="OrthoDB" id="4062651at2759"/>
<dbReference type="PhylomeDB" id="P42683"/>
<dbReference type="BRENDA" id="2.7.10.2">
    <property type="organism ID" value="1306"/>
</dbReference>
<dbReference type="Proteomes" id="UP000000539">
    <property type="component" value="Unassembled WGS sequence"/>
</dbReference>
<dbReference type="GO" id="GO:0005829">
    <property type="term" value="C:cytosol"/>
    <property type="evidence" value="ECO:0007669"/>
    <property type="project" value="UniProtKB-SubCell"/>
</dbReference>
<dbReference type="GO" id="GO:0045121">
    <property type="term" value="C:membrane raft"/>
    <property type="evidence" value="ECO:0000250"/>
    <property type="project" value="UniProtKB"/>
</dbReference>
<dbReference type="GO" id="GO:0000242">
    <property type="term" value="C:pericentriolar material"/>
    <property type="evidence" value="ECO:0000250"/>
    <property type="project" value="UniProtKB"/>
</dbReference>
<dbReference type="GO" id="GO:0005886">
    <property type="term" value="C:plasma membrane"/>
    <property type="evidence" value="ECO:0000318"/>
    <property type="project" value="GO_Central"/>
</dbReference>
<dbReference type="GO" id="GO:0005524">
    <property type="term" value="F:ATP binding"/>
    <property type="evidence" value="ECO:0007669"/>
    <property type="project" value="UniProtKB-KW"/>
</dbReference>
<dbReference type="GO" id="GO:0004715">
    <property type="term" value="F:non-membrane spanning protein tyrosine kinase activity"/>
    <property type="evidence" value="ECO:0000318"/>
    <property type="project" value="GO_Central"/>
</dbReference>
<dbReference type="GO" id="GO:0004722">
    <property type="term" value="F:protein serine/threonine phosphatase activity"/>
    <property type="evidence" value="ECO:0000250"/>
    <property type="project" value="UniProtKB"/>
</dbReference>
<dbReference type="GO" id="GO:0004713">
    <property type="term" value="F:protein tyrosine kinase activity"/>
    <property type="evidence" value="ECO:0000250"/>
    <property type="project" value="UniProtKB"/>
</dbReference>
<dbReference type="GO" id="GO:0042169">
    <property type="term" value="F:SH2 domain binding"/>
    <property type="evidence" value="ECO:0000250"/>
    <property type="project" value="UniProtKB"/>
</dbReference>
<dbReference type="GO" id="GO:0005102">
    <property type="term" value="F:signaling receptor binding"/>
    <property type="evidence" value="ECO:0000318"/>
    <property type="project" value="GO_Central"/>
</dbReference>
<dbReference type="GO" id="GO:0050853">
    <property type="term" value="P:B cell receptor signaling pathway"/>
    <property type="evidence" value="ECO:0000318"/>
    <property type="project" value="GO_Central"/>
</dbReference>
<dbReference type="GO" id="GO:0007169">
    <property type="term" value="P:cell surface receptor protein tyrosine kinase signaling pathway"/>
    <property type="evidence" value="ECO:0000318"/>
    <property type="project" value="GO_Central"/>
</dbReference>
<dbReference type="GO" id="GO:0006882">
    <property type="term" value="P:intracellular zinc ion homeostasis"/>
    <property type="evidence" value="ECO:0000250"/>
    <property type="project" value="UniProtKB"/>
</dbReference>
<dbReference type="GO" id="GO:2001244">
    <property type="term" value="P:positive regulation of intrinsic apoptotic signaling pathway"/>
    <property type="evidence" value="ECO:0000250"/>
    <property type="project" value="UniProtKB"/>
</dbReference>
<dbReference type="GO" id="GO:0050870">
    <property type="term" value="P:positive regulation of T cell activation"/>
    <property type="evidence" value="ECO:0000250"/>
    <property type="project" value="UniProtKB"/>
</dbReference>
<dbReference type="GO" id="GO:0009410">
    <property type="term" value="P:response to xenobiotic stimulus"/>
    <property type="evidence" value="ECO:0000250"/>
    <property type="project" value="UniProtKB"/>
</dbReference>
<dbReference type="GO" id="GO:0030217">
    <property type="term" value="P:T cell differentiation"/>
    <property type="evidence" value="ECO:0000250"/>
    <property type="project" value="UniProtKB"/>
</dbReference>
<dbReference type="CDD" id="cd05067">
    <property type="entry name" value="PTKc_Lck_Blk"/>
    <property type="match status" value="1"/>
</dbReference>
<dbReference type="CDD" id="cd10362">
    <property type="entry name" value="SH2_Src_Lck"/>
    <property type="match status" value="1"/>
</dbReference>
<dbReference type="CDD" id="cd12005">
    <property type="entry name" value="SH3_Lck"/>
    <property type="match status" value="1"/>
</dbReference>
<dbReference type="FunFam" id="1.10.510.10:FF:000553">
    <property type="entry name" value="Tyrosine-protein kinase"/>
    <property type="match status" value="1"/>
</dbReference>
<dbReference type="FunFam" id="2.30.30.40:FF:000152">
    <property type="entry name" value="Tyrosine-protein kinase"/>
    <property type="match status" value="1"/>
</dbReference>
<dbReference type="FunFam" id="3.30.200.20:FF:000036">
    <property type="entry name" value="Tyrosine-protein kinase"/>
    <property type="match status" value="1"/>
</dbReference>
<dbReference type="FunFam" id="3.30.505.10:FF:000077">
    <property type="entry name" value="Tyrosine-protein kinase Lck"/>
    <property type="match status" value="1"/>
</dbReference>
<dbReference type="Gene3D" id="3.30.200.20">
    <property type="entry name" value="Phosphorylase Kinase, domain 1"/>
    <property type="match status" value="1"/>
</dbReference>
<dbReference type="Gene3D" id="3.30.505.10">
    <property type="entry name" value="SH2 domain"/>
    <property type="match status" value="1"/>
</dbReference>
<dbReference type="Gene3D" id="2.30.30.40">
    <property type="entry name" value="SH3 Domains"/>
    <property type="match status" value="1"/>
</dbReference>
<dbReference type="Gene3D" id="1.10.510.10">
    <property type="entry name" value="Transferase(Phosphotransferase) domain 1"/>
    <property type="match status" value="1"/>
</dbReference>
<dbReference type="InterPro" id="IPR011009">
    <property type="entry name" value="Kinase-like_dom_sf"/>
</dbReference>
<dbReference type="InterPro" id="IPR035850">
    <property type="entry name" value="Lck_SH2"/>
</dbReference>
<dbReference type="InterPro" id="IPR035749">
    <property type="entry name" value="Lck_SH3"/>
</dbReference>
<dbReference type="InterPro" id="IPR050198">
    <property type="entry name" value="Non-receptor_tyrosine_kinases"/>
</dbReference>
<dbReference type="InterPro" id="IPR000719">
    <property type="entry name" value="Prot_kinase_dom"/>
</dbReference>
<dbReference type="InterPro" id="IPR017441">
    <property type="entry name" value="Protein_kinase_ATP_BS"/>
</dbReference>
<dbReference type="InterPro" id="IPR001245">
    <property type="entry name" value="Ser-Thr/Tyr_kinase_cat_dom"/>
</dbReference>
<dbReference type="InterPro" id="IPR000980">
    <property type="entry name" value="SH2"/>
</dbReference>
<dbReference type="InterPro" id="IPR036860">
    <property type="entry name" value="SH2_dom_sf"/>
</dbReference>
<dbReference type="InterPro" id="IPR036028">
    <property type="entry name" value="SH3-like_dom_sf"/>
</dbReference>
<dbReference type="InterPro" id="IPR001452">
    <property type="entry name" value="SH3_domain"/>
</dbReference>
<dbReference type="InterPro" id="IPR008266">
    <property type="entry name" value="Tyr_kinase_AS"/>
</dbReference>
<dbReference type="InterPro" id="IPR020635">
    <property type="entry name" value="Tyr_kinase_cat_dom"/>
</dbReference>
<dbReference type="PANTHER" id="PTHR24418">
    <property type="entry name" value="TYROSINE-PROTEIN KINASE"/>
    <property type="match status" value="1"/>
</dbReference>
<dbReference type="Pfam" id="PF07714">
    <property type="entry name" value="PK_Tyr_Ser-Thr"/>
    <property type="match status" value="1"/>
</dbReference>
<dbReference type="Pfam" id="PF00017">
    <property type="entry name" value="SH2"/>
    <property type="match status" value="1"/>
</dbReference>
<dbReference type="Pfam" id="PF00018">
    <property type="entry name" value="SH3_1"/>
    <property type="match status" value="1"/>
</dbReference>
<dbReference type="PRINTS" id="PR00401">
    <property type="entry name" value="SH2DOMAIN"/>
</dbReference>
<dbReference type="PRINTS" id="PR00452">
    <property type="entry name" value="SH3DOMAIN"/>
</dbReference>
<dbReference type="PRINTS" id="PR00109">
    <property type="entry name" value="TYRKINASE"/>
</dbReference>
<dbReference type="SMART" id="SM00252">
    <property type="entry name" value="SH2"/>
    <property type="match status" value="1"/>
</dbReference>
<dbReference type="SMART" id="SM00326">
    <property type="entry name" value="SH3"/>
    <property type="match status" value="1"/>
</dbReference>
<dbReference type="SMART" id="SM00219">
    <property type="entry name" value="TyrKc"/>
    <property type="match status" value="1"/>
</dbReference>
<dbReference type="SUPFAM" id="SSF56112">
    <property type="entry name" value="Protein kinase-like (PK-like)"/>
    <property type="match status" value="1"/>
</dbReference>
<dbReference type="SUPFAM" id="SSF55550">
    <property type="entry name" value="SH2 domain"/>
    <property type="match status" value="1"/>
</dbReference>
<dbReference type="SUPFAM" id="SSF50044">
    <property type="entry name" value="SH3-domain"/>
    <property type="match status" value="1"/>
</dbReference>
<dbReference type="PROSITE" id="PS00107">
    <property type="entry name" value="PROTEIN_KINASE_ATP"/>
    <property type="match status" value="1"/>
</dbReference>
<dbReference type="PROSITE" id="PS50011">
    <property type="entry name" value="PROTEIN_KINASE_DOM"/>
    <property type="match status" value="1"/>
</dbReference>
<dbReference type="PROSITE" id="PS00109">
    <property type="entry name" value="PROTEIN_KINASE_TYR"/>
    <property type="match status" value="1"/>
</dbReference>
<dbReference type="PROSITE" id="PS50001">
    <property type="entry name" value="SH2"/>
    <property type="match status" value="1"/>
</dbReference>
<dbReference type="PROSITE" id="PS50002">
    <property type="entry name" value="SH3"/>
    <property type="match status" value="1"/>
</dbReference>
<gene>
    <name type="primary">LCK</name>
</gene>
<sequence>MGCCCSSDYDEDWIENIDICEHCNYPIDPDSKRQQLIRNVSEVRDPLVSYEAMSPPCSPLQDKLVVALYDYEPTHDGDLGLKQGEKLRVLEESGEWWRAQSLTTGQEGLIPHNFVAMVNSLEPEPWFFKNLSRKNAEARLLASGNTHGSFLIRESETSKGSYSLSVRDFDQNQGETVKHYKIRNMDNGGYYISPRVTFSSLHELVEYYSSSSDGLCTRLGKPCRTQKPQKPWWQDEWEVPRESLKLVEKLGAGQFGEVWMGFYNGHTKVAIKNLKQGSMSPSAFLAEANLMKNLQHPRLVRLYAVVTKEPIYIITEYMEKGSLVDFLKTSEGIKLSINKLLDMAAQIAEGMAFIEAKNYIHRDLRAANILVSEALCCKIADFGLARLIEDNEYTAREGAKFPIKWTAPEAINYGTFTIKSDVWSFGILLTEIVTYGRIPYPGMTNPEVIQNLERGYRMPQPDNCPQELYELMMQCWKEQPEERPTFEYMKSVLEDFFTATEGQYQQQP</sequence>
<comment type="function">
    <text evidence="1">Tyrosine kinase that plays an essential role for the selection and maturation of developing T-cell in the thymus and in mature T-cell function. Is constitutively associated with the cytoplasmic portions of the CD4 and CD8 surface receptors and plays a key role in T-cell antigen receptor(TCR)-linked signal transduction pathways (By similarity).</text>
</comment>
<comment type="catalytic activity">
    <reaction evidence="6">
        <text>L-tyrosyl-[protein] + ATP = O-phospho-L-tyrosyl-[protein] + ADP + H(+)</text>
        <dbReference type="Rhea" id="RHEA:10596"/>
        <dbReference type="Rhea" id="RHEA-COMP:10136"/>
        <dbReference type="Rhea" id="RHEA-COMP:20101"/>
        <dbReference type="ChEBI" id="CHEBI:15378"/>
        <dbReference type="ChEBI" id="CHEBI:30616"/>
        <dbReference type="ChEBI" id="CHEBI:46858"/>
        <dbReference type="ChEBI" id="CHEBI:61978"/>
        <dbReference type="ChEBI" id="CHEBI:456216"/>
        <dbReference type="EC" id="2.7.10.2"/>
    </reaction>
</comment>
<comment type="activity regulation">
    <text evidence="1">Inhibited by tyrosine phosphorylation.</text>
</comment>
<comment type="subunit">
    <text evidence="1">Binds to the cytoplasmic domain of cell surface receptors, such as CD4, CD8.</text>
</comment>
<comment type="subcellular location">
    <subcellularLocation>
        <location evidence="2">Cell membrane</location>
        <topology evidence="2">Lipid-anchor</topology>
        <orientation evidence="2">Cytoplasmic side</orientation>
    </subcellularLocation>
    <subcellularLocation>
        <location evidence="2">Cytoplasm</location>
        <location evidence="2">Cytosol</location>
    </subcellularLocation>
</comment>
<comment type="PTM">
    <text evidence="1">Phosphorylated on Tyr-393, which increases enzymatic activity, this site is dephosphorylated by PTN22. Phosphorylated on Tyr-504, presumably by CSK, which decreases activity. Dephosphorylated by PTPRC/CD45. Dephosphorylation at Tyr-393 by PTPN2 negatively regulates T-cells differentiation (By similarity).</text>
</comment>
<comment type="PTM">
    <text evidence="2">Palmitoylation regulates association with the plasma membrane.</text>
</comment>
<comment type="similarity">
    <text evidence="3">Belongs to the protein kinase superfamily. Tyr protein kinase family. SRC subfamily.</text>
</comment>
<comment type="sequence caution" evidence="7">
    <conflict type="erroneous initiation">
        <sequence resource="EMBL-CDS" id="AAA49081"/>
    </conflict>
</comment>